<feature type="chain" id="PRO_1000069660" description="Thymidine phosphorylase">
    <location>
        <begin position="1"/>
        <end position="440"/>
    </location>
</feature>
<gene>
    <name evidence="1" type="primary">deoA</name>
    <name type="ordered locus">EcHS_A4617</name>
</gene>
<comment type="function">
    <text evidence="1">The enzymes which catalyze the reversible phosphorolysis of pyrimidine nucleosides are involved in the degradation of these compounds and in their utilization as carbon and energy sources, or in the rescue of pyrimidine bases for nucleotide synthesis.</text>
</comment>
<comment type="catalytic activity">
    <reaction evidence="1">
        <text>thymidine + phosphate = 2-deoxy-alpha-D-ribose 1-phosphate + thymine</text>
        <dbReference type="Rhea" id="RHEA:16037"/>
        <dbReference type="ChEBI" id="CHEBI:17748"/>
        <dbReference type="ChEBI" id="CHEBI:17821"/>
        <dbReference type="ChEBI" id="CHEBI:43474"/>
        <dbReference type="ChEBI" id="CHEBI:57259"/>
        <dbReference type="EC" id="2.4.2.4"/>
    </reaction>
</comment>
<comment type="pathway">
    <text evidence="1">Pyrimidine metabolism; dTMP biosynthesis via salvage pathway; dTMP from thymine: step 1/2.</text>
</comment>
<comment type="subunit">
    <text evidence="1">Homodimer.</text>
</comment>
<comment type="similarity">
    <text evidence="1">Belongs to the thymidine/pyrimidine-nucleoside phosphorylase family.</text>
</comment>
<sequence>MFLAQEIIRKKRDGHALSDEEIRFFINGIRDNTISEGQIAALAMTIFFHDMTMPERVSLTMAMRDSGTVLDWKSLHLNGPIVDKHSTGGVGDVTSLMLGPMVAACGGYIPMISGRGLGHTGGTLDKLESIPGFDIFPDDNRFREIIKDVGVAIIGQTSSLAPADKRFYATRDITATVDSIPLITASILAKKLAEGLDALVMDVKVGSGAFMPTYELSEALAEAIVGVANGAGVRTTALLTDMNQVLASSAGNAVEVREAVQFLTGEYRNPRLFDVTMALCVEMLISGKLAKDDAEARAKLQAVLDNGKAAEVFGRMVAAQKGPTDFVENYAKYLPTAMLTKAVYADTEGFVSEMDTRALGMAVVAMGGGRRQASDTIDYSVGFTDMARLGDQVDGQRPLAVIHAKDENSWQDAAKAVKAAIKLADKAPESTPTVYRRISE</sequence>
<keyword id="KW-0328">Glycosyltransferase</keyword>
<keyword id="KW-0808">Transferase</keyword>
<dbReference type="EC" id="2.4.2.4" evidence="1"/>
<dbReference type="EMBL" id="CP000802">
    <property type="protein sequence ID" value="ABV08765.1"/>
    <property type="molecule type" value="Genomic_DNA"/>
</dbReference>
<dbReference type="RefSeq" id="WP_000477808.1">
    <property type="nucleotide sequence ID" value="NC_009800.1"/>
</dbReference>
<dbReference type="SMR" id="A8A8B1"/>
<dbReference type="GeneID" id="75202935"/>
<dbReference type="KEGG" id="ecx:EcHS_A4617"/>
<dbReference type="HOGENOM" id="CLU_025040_0_1_6"/>
<dbReference type="UniPathway" id="UPA00578">
    <property type="reaction ID" value="UER00638"/>
</dbReference>
<dbReference type="GO" id="GO:0005829">
    <property type="term" value="C:cytosol"/>
    <property type="evidence" value="ECO:0007669"/>
    <property type="project" value="TreeGrafter"/>
</dbReference>
<dbReference type="GO" id="GO:0004645">
    <property type="term" value="F:1,4-alpha-oligoglucan phosphorylase activity"/>
    <property type="evidence" value="ECO:0007669"/>
    <property type="project" value="InterPro"/>
</dbReference>
<dbReference type="GO" id="GO:0009032">
    <property type="term" value="F:thymidine phosphorylase activity"/>
    <property type="evidence" value="ECO:0007669"/>
    <property type="project" value="UniProtKB-UniRule"/>
</dbReference>
<dbReference type="GO" id="GO:0006206">
    <property type="term" value="P:pyrimidine nucleobase metabolic process"/>
    <property type="evidence" value="ECO:0007669"/>
    <property type="project" value="InterPro"/>
</dbReference>
<dbReference type="GO" id="GO:0046104">
    <property type="term" value="P:thymidine metabolic process"/>
    <property type="evidence" value="ECO:0007669"/>
    <property type="project" value="UniProtKB-UniRule"/>
</dbReference>
<dbReference type="FunFam" id="3.40.1030.10:FF:000001">
    <property type="entry name" value="Thymidine phosphorylase"/>
    <property type="match status" value="1"/>
</dbReference>
<dbReference type="FunFam" id="3.90.1170.30:FF:000001">
    <property type="entry name" value="Thymidine phosphorylase"/>
    <property type="match status" value="1"/>
</dbReference>
<dbReference type="Gene3D" id="3.40.1030.10">
    <property type="entry name" value="Nucleoside phosphorylase/phosphoribosyltransferase catalytic domain"/>
    <property type="match status" value="1"/>
</dbReference>
<dbReference type="Gene3D" id="3.90.1170.30">
    <property type="entry name" value="Pyrimidine nucleoside phosphorylase-like, C-terminal domain"/>
    <property type="match status" value="1"/>
</dbReference>
<dbReference type="Gene3D" id="1.20.970.10">
    <property type="entry name" value="Transferase, Pyrimidine Nucleoside Phosphorylase, Chain C"/>
    <property type="match status" value="1"/>
</dbReference>
<dbReference type="HAMAP" id="MF_01628">
    <property type="entry name" value="Thymid_phosp"/>
    <property type="match status" value="1"/>
</dbReference>
<dbReference type="InterPro" id="IPR000312">
    <property type="entry name" value="Glycosyl_Trfase_fam3"/>
</dbReference>
<dbReference type="InterPro" id="IPR017459">
    <property type="entry name" value="Glycosyl_Trfase_fam3_N_dom"/>
</dbReference>
<dbReference type="InterPro" id="IPR036320">
    <property type="entry name" value="Glycosyl_Trfase_fam3_N_dom_sf"/>
</dbReference>
<dbReference type="InterPro" id="IPR035902">
    <property type="entry name" value="Nuc_phospho_transferase"/>
</dbReference>
<dbReference type="InterPro" id="IPR036566">
    <property type="entry name" value="PYNP-like_C_sf"/>
</dbReference>
<dbReference type="InterPro" id="IPR013102">
    <property type="entry name" value="PYNP_C"/>
</dbReference>
<dbReference type="InterPro" id="IPR018090">
    <property type="entry name" value="Pyrmidine_PPas_bac/euk"/>
</dbReference>
<dbReference type="InterPro" id="IPR017872">
    <property type="entry name" value="Pyrmidine_PPase_CS"/>
</dbReference>
<dbReference type="InterPro" id="IPR000053">
    <property type="entry name" value="Thymidine/pyrmidine_PPase"/>
</dbReference>
<dbReference type="InterPro" id="IPR013465">
    <property type="entry name" value="Thymidine_Pase"/>
</dbReference>
<dbReference type="NCBIfam" id="NF004490">
    <property type="entry name" value="PRK05820.1"/>
    <property type="match status" value="1"/>
</dbReference>
<dbReference type="NCBIfam" id="TIGR02643">
    <property type="entry name" value="T_phosphoryl"/>
    <property type="match status" value="1"/>
</dbReference>
<dbReference type="NCBIfam" id="TIGR02644">
    <property type="entry name" value="Y_phosphoryl"/>
    <property type="match status" value="1"/>
</dbReference>
<dbReference type="PANTHER" id="PTHR10515">
    <property type="entry name" value="THYMIDINE PHOSPHORYLASE"/>
    <property type="match status" value="1"/>
</dbReference>
<dbReference type="PANTHER" id="PTHR10515:SF0">
    <property type="entry name" value="THYMIDINE PHOSPHORYLASE"/>
    <property type="match status" value="1"/>
</dbReference>
<dbReference type="Pfam" id="PF02885">
    <property type="entry name" value="Glycos_trans_3N"/>
    <property type="match status" value="1"/>
</dbReference>
<dbReference type="Pfam" id="PF00591">
    <property type="entry name" value="Glycos_transf_3"/>
    <property type="match status" value="1"/>
</dbReference>
<dbReference type="Pfam" id="PF07831">
    <property type="entry name" value="PYNP_C"/>
    <property type="match status" value="1"/>
</dbReference>
<dbReference type="PIRSF" id="PIRSF000478">
    <property type="entry name" value="TP_PyNP"/>
    <property type="match status" value="1"/>
</dbReference>
<dbReference type="SMART" id="SM00941">
    <property type="entry name" value="PYNP_C"/>
    <property type="match status" value="1"/>
</dbReference>
<dbReference type="SUPFAM" id="SSF52418">
    <property type="entry name" value="Nucleoside phosphorylase/phosphoribosyltransferase catalytic domain"/>
    <property type="match status" value="1"/>
</dbReference>
<dbReference type="SUPFAM" id="SSF47648">
    <property type="entry name" value="Nucleoside phosphorylase/phosphoribosyltransferase N-terminal domain"/>
    <property type="match status" value="1"/>
</dbReference>
<dbReference type="SUPFAM" id="SSF54680">
    <property type="entry name" value="Pyrimidine nucleoside phosphorylase C-terminal domain"/>
    <property type="match status" value="1"/>
</dbReference>
<dbReference type="PROSITE" id="PS00647">
    <property type="entry name" value="THYMID_PHOSPHORYLASE"/>
    <property type="match status" value="1"/>
</dbReference>
<protein>
    <recommendedName>
        <fullName evidence="1">Thymidine phosphorylase</fullName>
        <ecNumber evidence="1">2.4.2.4</ecNumber>
    </recommendedName>
    <alternativeName>
        <fullName evidence="1">TdRPase</fullName>
    </alternativeName>
</protein>
<proteinExistence type="inferred from homology"/>
<evidence type="ECO:0000255" key="1">
    <source>
        <dbReference type="HAMAP-Rule" id="MF_01628"/>
    </source>
</evidence>
<accession>A8A8B1</accession>
<organism>
    <name type="scientific">Escherichia coli O9:H4 (strain HS)</name>
    <dbReference type="NCBI Taxonomy" id="331112"/>
    <lineage>
        <taxon>Bacteria</taxon>
        <taxon>Pseudomonadati</taxon>
        <taxon>Pseudomonadota</taxon>
        <taxon>Gammaproteobacteria</taxon>
        <taxon>Enterobacterales</taxon>
        <taxon>Enterobacteriaceae</taxon>
        <taxon>Escherichia</taxon>
    </lineage>
</organism>
<name>TYPH_ECOHS</name>
<reference key="1">
    <citation type="journal article" date="2008" name="J. Bacteriol.">
        <title>The pangenome structure of Escherichia coli: comparative genomic analysis of E. coli commensal and pathogenic isolates.</title>
        <authorList>
            <person name="Rasko D.A."/>
            <person name="Rosovitz M.J."/>
            <person name="Myers G.S.A."/>
            <person name="Mongodin E.F."/>
            <person name="Fricke W.F."/>
            <person name="Gajer P."/>
            <person name="Crabtree J."/>
            <person name="Sebaihia M."/>
            <person name="Thomson N.R."/>
            <person name="Chaudhuri R."/>
            <person name="Henderson I.R."/>
            <person name="Sperandio V."/>
            <person name="Ravel J."/>
        </authorList>
    </citation>
    <scope>NUCLEOTIDE SEQUENCE [LARGE SCALE GENOMIC DNA]</scope>
    <source>
        <strain>HS</strain>
    </source>
</reference>